<organism>
    <name type="scientific">Arabidopsis thaliana</name>
    <name type="common">Mouse-ear cress</name>
    <dbReference type="NCBI Taxonomy" id="3702"/>
    <lineage>
        <taxon>Eukaryota</taxon>
        <taxon>Viridiplantae</taxon>
        <taxon>Streptophyta</taxon>
        <taxon>Embryophyta</taxon>
        <taxon>Tracheophyta</taxon>
        <taxon>Spermatophyta</taxon>
        <taxon>Magnoliopsida</taxon>
        <taxon>eudicotyledons</taxon>
        <taxon>Gunneridae</taxon>
        <taxon>Pentapetalae</taxon>
        <taxon>rosids</taxon>
        <taxon>malvids</taxon>
        <taxon>Brassicales</taxon>
        <taxon>Brassicaceae</taxon>
        <taxon>Camelineae</taxon>
        <taxon>Arabidopsis</taxon>
    </lineage>
</organism>
<feature type="chain" id="PRO_0000406093" description="General transcription and DNA repair factor IIH subunit TFB1-3">
    <location>
        <begin position="1"/>
        <end position="579"/>
    </location>
</feature>
<feature type="domain" description="BSD 1" evidence="2">
    <location>
        <begin position="107"/>
        <end position="161"/>
    </location>
</feature>
<feature type="domain" description="BSD 2" evidence="2">
    <location>
        <begin position="186"/>
        <end position="238"/>
    </location>
</feature>
<feature type="splice variant" id="VSP_040742" description="In isoform 3." evidence="4">
    <location>
        <begin position="1"/>
        <end position="335"/>
    </location>
</feature>
<feature type="splice variant" id="VSP_040743" description="In isoform 2." evidence="5">
    <original>RSLLQDLNRHAAVVLEG</original>
    <variation>SIKNSHQMTSQQIVDEG</variation>
    <location>
        <begin position="316"/>
        <end position="332"/>
    </location>
</feature>
<feature type="splice variant" id="VSP_040744" description="In isoform 2." evidence="5">
    <location>
        <begin position="333"/>
        <end position="579"/>
    </location>
</feature>
<feature type="splice variant" id="VSP_040745" description="In isoform 3." evidence="4">
    <original>NVQSEDTRIVA</original>
    <variation>MYFGPLLLVLG</variation>
    <location>
        <begin position="336"/>
        <end position="346"/>
    </location>
</feature>
<sequence length="579" mass="66386">MEKRVKYKSFVKDPGTLGSLELSEVMLLFVPNDPKSDLKLKVQTHNIKSQKYTKEGSNKPPWLNLTSKQGRSHIFEFENYPDMHACRDFITKALAKCEEEPNKLVVLTPAEQLSMAEFELRFKLLRENSELQKLHKQFVESKVLTEDEFWSTRKKLLGKDSIRKSKQQMGLKSMMVSGIKPSTDGRTNRVTFNLTSEIIFQIFAEKPAVRQAFINYVPKKMTEKDFWTKYFRAEYLYSTKNTAVAAAEAAEDEELAVFLKPDEILAQEARQKMRRVDPTLDMDADEGDDYTHLMDHGIQRDGTNDIIEPQNDQLKRSLLQDLNRHAAVVLEGRCINVQSEDTRIVAEALTRAKQVSKADGEITKDANQERLERMSRATEMEDLQAPQNFPLAPLSIKDPRDYFESQQGNILSEPRGAKASKRNVHEAYGLLKESILVIRMTGLSDPLIKPEVSFEVFSSLTRTISTAKNILGKNPQESFLDRLPKSTKDEVIHHWTSIQELVRHFWSSYPITTTYLSTKVGKLKDAMSNTYSLLDAMKQSVQSDLRHQVSLLVRPMQQALDAAFQHYESDLQRRTAKIT</sequence>
<protein>
    <recommendedName>
        <fullName>General transcription and DNA repair factor IIH subunit TFB1-3</fullName>
        <shortName evidence="3">AtTFB1-3</shortName>
        <shortName>TFIIH subunit TFB1-3</shortName>
    </recommendedName>
    <alternativeName>
        <fullName>RNA polymerase II transcription factor B subunit 1-3</fullName>
    </alternativeName>
</protein>
<dbReference type="EMBL" id="AL132962">
    <property type="protein sequence ID" value="CAB71072.1"/>
    <property type="status" value="ALT_SEQ"/>
    <property type="molecule type" value="Genomic_DNA"/>
</dbReference>
<dbReference type="EMBL" id="CP002686">
    <property type="protein sequence ID" value="AEE80200.1"/>
    <property type="molecule type" value="Genomic_DNA"/>
</dbReference>
<dbReference type="EMBL" id="AK176589">
    <property type="protein sequence ID" value="BAD44352.1"/>
    <property type="molecule type" value="mRNA"/>
</dbReference>
<dbReference type="EMBL" id="BT021122">
    <property type="protein sequence ID" value="AAX22257.1"/>
    <property type="molecule type" value="mRNA"/>
</dbReference>
<dbReference type="PIR" id="T47934">
    <property type="entry name" value="T47934"/>
</dbReference>
<dbReference type="RefSeq" id="NP_191701.4">
    <molecule id="Q9M322-1"/>
    <property type="nucleotide sequence ID" value="NM_116007.5"/>
</dbReference>
<dbReference type="SMR" id="Q9M322"/>
<dbReference type="FunCoup" id="Q9M322">
    <property type="interactions" value="3879"/>
</dbReference>
<dbReference type="STRING" id="3702.Q9M322"/>
<dbReference type="PaxDb" id="3702-AT3G61420.1"/>
<dbReference type="ProteomicsDB" id="246435">
    <molecule id="Q9M322-1"/>
</dbReference>
<dbReference type="EnsemblPlants" id="AT3G61420.1">
    <molecule id="Q9M322-1"/>
    <property type="protein sequence ID" value="AT3G61420.1"/>
    <property type="gene ID" value="AT3G61420"/>
</dbReference>
<dbReference type="GeneID" id="825315"/>
<dbReference type="Gramene" id="AT3G61420.1">
    <molecule id="Q9M322-1"/>
    <property type="protein sequence ID" value="AT3G61420.1"/>
    <property type="gene ID" value="AT3G61420"/>
</dbReference>
<dbReference type="KEGG" id="ath:AT3G61420"/>
<dbReference type="Araport" id="AT3G61420"/>
<dbReference type="TAIR" id="AT3G61420"/>
<dbReference type="eggNOG" id="KOG2074">
    <property type="taxonomic scope" value="Eukaryota"/>
</dbReference>
<dbReference type="HOGENOM" id="CLU_017639_2_0_1"/>
<dbReference type="InParanoid" id="Q9M322"/>
<dbReference type="OMA" id="PHEMTEQ"/>
<dbReference type="PhylomeDB" id="Q9M322"/>
<dbReference type="PRO" id="PR:Q9M322"/>
<dbReference type="Proteomes" id="UP000006548">
    <property type="component" value="Chromosome 3"/>
</dbReference>
<dbReference type="ExpressionAtlas" id="Q9M322">
    <property type="expression patterns" value="baseline and differential"/>
</dbReference>
<dbReference type="GO" id="GO:0000439">
    <property type="term" value="C:transcription factor TFIIH core complex"/>
    <property type="evidence" value="ECO:0007669"/>
    <property type="project" value="InterPro"/>
</dbReference>
<dbReference type="GO" id="GO:0006351">
    <property type="term" value="P:DNA-templated transcription"/>
    <property type="evidence" value="ECO:0007669"/>
    <property type="project" value="InterPro"/>
</dbReference>
<dbReference type="GO" id="GO:0006289">
    <property type="term" value="P:nucleotide-excision repair"/>
    <property type="evidence" value="ECO:0007669"/>
    <property type="project" value="InterPro"/>
</dbReference>
<dbReference type="FunFam" id="1.10.3970.10:FF:000002">
    <property type="entry name" value="Putative RNA polymerase II transcription factor B subunit 1-1"/>
    <property type="match status" value="1"/>
</dbReference>
<dbReference type="Gene3D" id="6.10.140.1200">
    <property type="match status" value="1"/>
</dbReference>
<dbReference type="Gene3D" id="1.10.3970.10">
    <property type="entry name" value="BSD domain"/>
    <property type="match status" value="1"/>
</dbReference>
<dbReference type="InterPro" id="IPR005607">
    <property type="entry name" value="BSD_dom"/>
</dbReference>
<dbReference type="InterPro" id="IPR035925">
    <property type="entry name" value="BSD_dom_sf"/>
</dbReference>
<dbReference type="InterPro" id="IPR027079">
    <property type="entry name" value="Tfb1/GTF2H1"/>
</dbReference>
<dbReference type="InterPro" id="IPR013876">
    <property type="entry name" value="TFIIH_BTF_p62_N"/>
</dbReference>
<dbReference type="PANTHER" id="PTHR12856">
    <property type="entry name" value="TRANSCRIPTION INITIATION FACTOR IIH-RELATED"/>
    <property type="match status" value="1"/>
</dbReference>
<dbReference type="Pfam" id="PF03909">
    <property type="entry name" value="BSD"/>
    <property type="match status" value="1"/>
</dbReference>
<dbReference type="Pfam" id="PF08567">
    <property type="entry name" value="PH_TFIIH"/>
    <property type="match status" value="1"/>
</dbReference>
<dbReference type="SMART" id="SM00751">
    <property type="entry name" value="BSD"/>
    <property type="match status" value="2"/>
</dbReference>
<dbReference type="SUPFAM" id="SSF140383">
    <property type="entry name" value="BSD domain-like"/>
    <property type="match status" value="2"/>
</dbReference>
<dbReference type="SUPFAM" id="SSF50729">
    <property type="entry name" value="PH domain-like"/>
    <property type="match status" value="1"/>
</dbReference>
<dbReference type="PROSITE" id="PS50858">
    <property type="entry name" value="BSD"/>
    <property type="match status" value="2"/>
</dbReference>
<evidence type="ECO:0000250" key="1">
    <source>
        <dbReference type="UniProtKB" id="P32780"/>
    </source>
</evidence>
<evidence type="ECO:0000255" key="2">
    <source>
        <dbReference type="PROSITE-ProRule" id="PRU00036"/>
    </source>
</evidence>
<evidence type="ECO:0000303" key="3">
    <source>
    </source>
</evidence>
<evidence type="ECO:0000303" key="4">
    <source ref="3"/>
</evidence>
<evidence type="ECO:0000303" key="5">
    <source ref="4"/>
</evidence>
<evidence type="ECO:0000305" key="6"/>
<evidence type="ECO:0000305" key="7">
    <source>
    </source>
</evidence>
<gene>
    <name evidence="6" type="primary">TFB1-3</name>
    <name evidence="6" type="synonym">GTF2H1-2</name>
    <name type="ordered locus">At3g61420</name>
    <name type="ORF">F2A19.20</name>
</gene>
<comment type="function">
    <text evidence="1">Component of the general transcription and DNA repair factor IIH (TFIIH) core complex, which is involved in general and transcription-coupled nucleotide excision repair (NER) of damaged DNA and, when complexed to CAK, in RNA transcription by RNA polymerase II. In NER, TFIIH acts by opening DNA around the lesion to allow the excision of the damaged oligonucleotide and its replacement by a new DNA fragment. In transcription, TFIIH has an essential role in transcription initiation. When the pre-initiation complex (PIC) has been established, TFIIH is required for promoter opening and promoter escape. Phosphorylation of the C-terminal tail (CTD) of the largest subunit of RNA polymerase II by the kinase module CAK controls the initiation of transcription.</text>
</comment>
<comment type="subunit">
    <text evidence="1 7">Component of the 7-subunit TFIIH core complex composed of XPB, XPD, TFB1/GTF2H1, GTF2H2/P44, TFB4/GTF2H3, TFB2/GTF2H4 and TFB5/GTF2H5, which is active in NER. The core complex associates with the 3-subunit CDK-activating kinase (CAK) module composed of CYCH1/cyclin H1, CDKD and MAT1/At4g30820 to form the 10-subunit holoenzyme (holo-TFIIH) active in transcription.</text>
</comment>
<comment type="subcellular location">
    <subcellularLocation>
        <location evidence="6">Nucleus</location>
    </subcellularLocation>
</comment>
<comment type="alternative products">
    <event type="alternative splicing"/>
    <isoform>
        <id>Q9M322-1</id>
        <name>1</name>
        <sequence type="displayed"/>
    </isoform>
    <isoform>
        <id>Q9M322-2</id>
        <name>2</name>
        <sequence type="described" ref="VSP_040743 VSP_040744"/>
    </isoform>
    <isoform>
        <id>Q9M322-3</id>
        <name>3</name>
        <sequence type="described" ref="VSP_040742 VSP_040745"/>
    </isoform>
</comment>
<comment type="similarity">
    <text evidence="6">Belongs to the TFB1 family.</text>
</comment>
<comment type="sequence caution" evidence="6">
    <conflict type="erroneous gene model prediction">
        <sequence resource="EMBL-CDS" id="CAB71072"/>
    </conflict>
</comment>
<name>TFB1C_ARATH</name>
<reference key="1">
    <citation type="journal article" date="2000" name="Nature">
        <title>Sequence and analysis of chromosome 3 of the plant Arabidopsis thaliana.</title>
        <authorList>
            <person name="Salanoubat M."/>
            <person name="Lemcke K."/>
            <person name="Rieger M."/>
            <person name="Ansorge W."/>
            <person name="Unseld M."/>
            <person name="Fartmann B."/>
            <person name="Valle G."/>
            <person name="Bloecker H."/>
            <person name="Perez-Alonso M."/>
            <person name="Obermaier B."/>
            <person name="Delseny M."/>
            <person name="Boutry M."/>
            <person name="Grivell L.A."/>
            <person name="Mache R."/>
            <person name="Puigdomenech P."/>
            <person name="De Simone V."/>
            <person name="Choisne N."/>
            <person name="Artiguenave F."/>
            <person name="Robert C."/>
            <person name="Brottier P."/>
            <person name="Wincker P."/>
            <person name="Cattolico L."/>
            <person name="Weissenbach J."/>
            <person name="Saurin W."/>
            <person name="Quetier F."/>
            <person name="Schaefer M."/>
            <person name="Mueller-Auer S."/>
            <person name="Gabel C."/>
            <person name="Fuchs M."/>
            <person name="Benes V."/>
            <person name="Wurmbach E."/>
            <person name="Drzonek H."/>
            <person name="Erfle H."/>
            <person name="Jordan N."/>
            <person name="Bangert S."/>
            <person name="Wiedelmann R."/>
            <person name="Kranz H."/>
            <person name="Voss H."/>
            <person name="Holland R."/>
            <person name="Brandt P."/>
            <person name="Nyakatura G."/>
            <person name="Vezzi A."/>
            <person name="D'Angelo M."/>
            <person name="Pallavicini A."/>
            <person name="Toppo S."/>
            <person name="Simionati B."/>
            <person name="Conrad A."/>
            <person name="Hornischer K."/>
            <person name="Kauer G."/>
            <person name="Loehnert T.-H."/>
            <person name="Nordsiek G."/>
            <person name="Reichelt J."/>
            <person name="Scharfe M."/>
            <person name="Schoen O."/>
            <person name="Bargues M."/>
            <person name="Terol J."/>
            <person name="Climent J."/>
            <person name="Navarro P."/>
            <person name="Collado C."/>
            <person name="Perez-Perez A."/>
            <person name="Ottenwaelder B."/>
            <person name="Duchemin D."/>
            <person name="Cooke R."/>
            <person name="Laudie M."/>
            <person name="Berger-Llauro C."/>
            <person name="Purnelle B."/>
            <person name="Masuy D."/>
            <person name="de Haan M."/>
            <person name="Maarse A.C."/>
            <person name="Alcaraz J.-P."/>
            <person name="Cottet A."/>
            <person name="Casacuberta E."/>
            <person name="Monfort A."/>
            <person name="Argiriou A."/>
            <person name="Flores M."/>
            <person name="Liguori R."/>
            <person name="Vitale D."/>
            <person name="Mannhaupt G."/>
            <person name="Haase D."/>
            <person name="Schoof H."/>
            <person name="Rudd S."/>
            <person name="Zaccaria P."/>
            <person name="Mewes H.-W."/>
            <person name="Mayer K.F.X."/>
            <person name="Kaul S."/>
            <person name="Town C.D."/>
            <person name="Koo H.L."/>
            <person name="Tallon L.J."/>
            <person name="Jenkins J."/>
            <person name="Rooney T."/>
            <person name="Rizzo M."/>
            <person name="Walts A."/>
            <person name="Utterback T."/>
            <person name="Fujii C.Y."/>
            <person name="Shea T.P."/>
            <person name="Creasy T.H."/>
            <person name="Haas B."/>
            <person name="Maiti R."/>
            <person name="Wu D."/>
            <person name="Peterson J."/>
            <person name="Van Aken S."/>
            <person name="Pai G."/>
            <person name="Militscher J."/>
            <person name="Sellers P."/>
            <person name="Gill J.E."/>
            <person name="Feldblyum T.V."/>
            <person name="Preuss D."/>
            <person name="Lin X."/>
            <person name="Nierman W.C."/>
            <person name="Salzberg S.L."/>
            <person name="White O."/>
            <person name="Venter J.C."/>
            <person name="Fraser C.M."/>
            <person name="Kaneko T."/>
            <person name="Nakamura Y."/>
            <person name="Sato S."/>
            <person name="Kato T."/>
            <person name="Asamizu E."/>
            <person name="Sasamoto S."/>
            <person name="Kimura T."/>
            <person name="Idesawa K."/>
            <person name="Kawashima K."/>
            <person name="Kishida Y."/>
            <person name="Kiyokawa C."/>
            <person name="Kohara M."/>
            <person name="Matsumoto M."/>
            <person name="Matsuno A."/>
            <person name="Muraki A."/>
            <person name="Nakayama S."/>
            <person name="Nakazaki N."/>
            <person name="Shinpo S."/>
            <person name="Takeuchi C."/>
            <person name="Wada T."/>
            <person name="Watanabe A."/>
            <person name="Yamada M."/>
            <person name="Yasuda M."/>
            <person name="Tabata S."/>
        </authorList>
    </citation>
    <scope>NUCLEOTIDE SEQUENCE [LARGE SCALE GENOMIC DNA]</scope>
    <source>
        <strain>cv. Columbia</strain>
    </source>
</reference>
<reference key="2">
    <citation type="journal article" date="2017" name="Plant J.">
        <title>Araport11: a complete reannotation of the Arabidopsis thaliana reference genome.</title>
        <authorList>
            <person name="Cheng C.Y."/>
            <person name="Krishnakumar V."/>
            <person name="Chan A.P."/>
            <person name="Thibaud-Nissen F."/>
            <person name="Schobel S."/>
            <person name="Town C.D."/>
        </authorList>
    </citation>
    <scope>GENOME REANNOTATION</scope>
    <source>
        <strain>cv. Columbia</strain>
    </source>
</reference>
<reference key="3">
    <citation type="submission" date="2004-09" db="EMBL/GenBank/DDBJ databases">
        <title>Large-scale analysis of RIKEN Arabidopsis full-length (RAFL) cDNAs.</title>
        <authorList>
            <person name="Totoki Y."/>
            <person name="Seki M."/>
            <person name="Ishida J."/>
            <person name="Nakajima M."/>
            <person name="Enju A."/>
            <person name="Kamiya A."/>
            <person name="Narusaka M."/>
            <person name="Shin-i T."/>
            <person name="Nakagawa M."/>
            <person name="Sakamoto N."/>
            <person name="Oishi K."/>
            <person name="Kohara Y."/>
            <person name="Kobayashi M."/>
            <person name="Toyoda A."/>
            <person name="Sakaki Y."/>
            <person name="Sakurai T."/>
            <person name="Iida K."/>
            <person name="Akiyama K."/>
            <person name="Satou M."/>
            <person name="Toyoda T."/>
            <person name="Konagaya A."/>
            <person name="Carninci P."/>
            <person name="Kawai J."/>
            <person name="Hayashizaki Y."/>
            <person name="Shinozaki K."/>
        </authorList>
    </citation>
    <scope>NUCLEOTIDE SEQUENCE [LARGE SCALE MRNA] (ISOFORM 3)</scope>
    <source>
        <strain>cv. Columbia</strain>
    </source>
</reference>
<reference key="4">
    <citation type="submission" date="2005-03" db="EMBL/GenBank/DDBJ databases">
        <title>Arabidopsis ORF clones.</title>
        <authorList>
            <person name="Kim C.J."/>
            <person name="Chen H."/>
            <person name="Cheuk R.F."/>
            <person name="Shinn P."/>
            <person name="Ecker J.R."/>
        </authorList>
    </citation>
    <scope>NUCLEOTIDE SEQUENCE [LARGE SCALE MRNA] (ISOFORM 2)</scope>
    <source>
        <strain>cv. Columbia</strain>
    </source>
</reference>
<reference key="5">
    <citation type="journal article" date="2005" name="Environ. Mol. Mutagen.">
        <title>Components of nucleotide excision repair and DNA damage tolerance in Arabidopsis thaliana.</title>
        <authorList>
            <person name="Kunz B.A."/>
            <person name="Anderson H.J."/>
            <person name="Osmond M.J."/>
            <person name="Vonarx E.J."/>
        </authorList>
    </citation>
    <scope>COMPONENT OF TFIIH CORE COMPLEX</scope>
    <scope>NOMENCLATURE</scope>
</reference>
<keyword id="KW-0025">Alternative splicing</keyword>
<keyword id="KW-0227">DNA damage</keyword>
<keyword id="KW-0234">DNA repair</keyword>
<keyword id="KW-0539">Nucleus</keyword>
<keyword id="KW-1185">Reference proteome</keyword>
<keyword id="KW-0677">Repeat</keyword>
<keyword id="KW-0804">Transcription</keyword>
<keyword id="KW-0805">Transcription regulation</keyword>
<accession>Q9M322</accession>
<accession>Q5BIV2</accession>
<accession>Q67Y79</accession>
<proteinExistence type="evidence at transcript level"/>